<proteinExistence type="inferred from homology"/>
<dbReference type="EMBL" id="CM000127">
    <property type="protein sequence ID" value="EAY86295.1"/>
    <property type="molecule type" value="Genomic_DNA"/>
</dbReference>
<dbReference type="SMR" id="A2X635"/>
<dbReference type="STRING" id="39946.A2X635"/>
<dbReference type="EnsemblPlants" id="BGIOSGA008432-TA">
    <property type="protein sequence ID" value="BGIOSGA008432-PA"/>
    <property type="gene ID" value="BGIOSGA008432"/>
</dbReference>
<dbReference type="EnsemblPlants" id="OsGoSa_02g0021430.01">
    <property type="protein sequence ID" value="OsGoSa_02g0021430.01"/>
    <property type="gene ID" value="OsGoSa_02g0021430"/>
</dbReference>
<dbReference type="EnsemblPlants" id="OsIR64_02g0020770.01">
    <property type="protein sequence ID" value="OsIR64_02g0020770.01"/>
    <property type="gene ID" value="OsIR64_02g0020770"/>
</dbReference>
<dbReference type="EnsemblPlants" id="OsKYG_02g0020980.01">
    <property type="protein sequence ID" value="OsKYG_02g0020980.01"/>
    <property type="gene ID" value="OsKYG_02g0020980"/>
</dbReference>
<dbReference type="EnsemblPlants" id="OsLaMu_02g0020960.01">
    <property type="protein sequence ID" value="OsLaMu_02g0020960.01"/>
    <property type="gene ID" value="OsLaMu_02g0020960"/>
</dbReference>
<dbReference type="EnsemblPlants" id="OsLima_02g0021240.01">
    <property type="protein sequence ID" value="OsLima_02g0021240.01"/>
    <property type="gene ID" value="OsLima_02g0021240"/>
</dbReference>
<dbReference type="EnsemblPlants" id="OsLiXu_02g0021130.01">
    <property type="protein sequence ID" value="OsLiXu_02g0021130.01"/>
    <property type="gene ID" value="OsLiXu_02g0021130"/>
</dbReference>
<dbReference type="EnsemblPlants" id="OsPr106_02g0021030.01">
    <property type="protein sequence ID" value="OsPr106_02g0021030.01"/>
    <property type="gene ID" value="OsPr106_02g0021030"/>
</dbReference>
<dbReference type="Gramene" id="BGIOSGA008432-TA">
    <property type="protein sequence ID" value="BGIOSGA008432-PA"/>
    <property type="gene ID" value="BGIOSGA008432"/>
</dbReference>
<dbReference type="Gramene" id="OsGoSa_02g0021430.01">
    <property type="protein sequence ID" value="OsGoSa_02g0021430.01"/>
    <property type="gene ID" value="OsGoSa_02g0021430"/>
</dbReference>
<dbReference type="Gramene" id="OsIR64_02g0020770.01">
    <property type="protein sequence ID" value="OsIR64_02g0020770.01"/>
    <property type="gene ID" value="OsIR64_02g0020770"/>
</dbReference>
<dbReference type="Gramene" id="OsKYG_02g0020980.01">
    <property type="protein sequence ID" value="OsKYG_02g0020980.01"/>
    <property type="gene ID" value="OsKYG_02g0020980"/>
</dbReference>
<dbReference type="Gramene" id="OsLaMu_02g0020960.01">
    <property type="protein sequence ID" value="OsLaMu_02g0020960.01"/>
    <property type="gene ID" value="OsLaMu_02g0020960"/>
</dbReference>
<dbReference type="Gramene" id="OsLima_02g0021240.01">
    <property type="protein sequence ID" value="OsLima_02g0021240.01"/>
    <property type="gene ID" value="OsLima_02g0021240"/>
</dbReference>
<dbReference type="Gramene" id="OsLiXu_02g0021130.01">
    <property type="protein sequence ID" value="OsLiXu_02g0021130.01"/>
    <property type="gene ID" value="OsLiXu_02g0021130"/>
</dbReference>
<dbReference type="Gramene" id="OsPr106_02g0021030.01">
    <property type="protein sequence ID" value="OsPr106_02g0021030.01"/>
    <property type="gene ID" value="OsPr106_02g0021030"/>
</dbReference>
<dbReference type="HOGENOM" id="CLU_114601_4_3_1"/>
<dbReference type="OMA" id="HVLFFAK"/>
<dbReference type="OrthoDB" id="5531344at2759"/>
<dbReference type="UniPathway" id="UPA00344"/>
<dbReference type="Proteomes" id="UP000007015">
    <property type="component" value="Chromosome 2"/>
</dbReference>
<dbReference type="GO" id="GO:1990133">
    <property type="term" value="C:molybdopterin adenylyltransferase complex"/>
    <property type="evidence" value="ECO:0007669"/>
    <property type="project" value="TreeGrafter"/>
</dbReference>
<dbReference type="GO" id="GO:1990140">
    <property type="term" value="C:molybdopterin synthase complex"/>
    <property type="evidence" value="ECO:0000250"/>
    <property type="project" value="UniProtKB"/>
</dbReference>
<dbReference type="GO" id="GO:0030366">
    <property type="term" value="F:molybdopterin synthase activity"/>
    <property type="evidence" value="ECO:0007669"/>
    <property type="project" value="UniProtKB-UniRule"/>
</dbReference>
<dbReference type="GO" id="GO:0000166">
    <property type="term" value="F:nucleotide binding"/>
    <property type="evidence" value="ECO:0007669"/>
    <property type="project" value="UniProtKB-KW"/>
</dbReference>
<dbReference type="GO" id="GO:0009734">
    <property type="term" value="P:auxin-activated signaling pathway"/>
    <property type="evidence" value="ECO:0007669"/>
    <property type="project" value="EnsemblPlants"/>
</dbReference>
<dbReference type="GO" id="GO:0006777">
    <property type="term" value="P:Mo-molybdopterin cofactor biosynthetic process"/>
    <property type="evidence" value="ECO:0000250"/>
    <property type="project" value="UniProtKB"/>
</dbReference>
<dbReference type="CDD" id="cd00754">
    <property type="entry name" value="Ubl_MoaD"/>
    <property type="match status" value="1"/>
</dbReference>
<dbReference type="FunFam" id="3.10.20.30:FF:000010">
    <property type="entry name" value="Molybdopterin synthase sulfur carrier subunit"/>
    <property type="match status" value="1"/>
</dbReference>
<dbReference type="Gene3D" id="3.10.20.30">
    <property type="match status" value="1"/>
</dbReference>
<dbReference type="HAMAP" id="MF_03051">
    <property type="entry name" value="MOCS2A"/>
    <property type="match status" value="1"/>
</dbReference>
<dbReference type="InterPro" id="IPR012675">
    <property type="entry name" value="Beta-grasp_dom_sf"/>
</dbReference>
<dbReference type="InterPro" id="IPR044672">
    <property type="entry name" value="MOCS2A"/>
</dbReference>
<dbReference type="InterPro" id="IPR028887">
    <property type="entry name" value="MOCS2A_euk"/>
</dbReference>
<dbReference type="InterPro" id="IPR016155">
    <property type="entry name" value="Mopterin_synth/thiamin_S_b"/>
</dbReference>
<dbReference type="InterPro" id="IPR003749">
    <property type="entry name" value="ThiS/MoaD-like"/>
</dbReference>
<dbReference type="NCBIfam" id="TIGR01682">
    <property type="entry name" value="moaD"/>
    <property type="match status" value="1"/>
</dbReference>
<dbReference type="PANTHER" id="PTHR33359">
    <property type="entry name" value="MOLYBDOPTERIN SYNTHASE SULFUR CARRIER SUBUNIT"/>
    <property type="match status" value="1"/>
</dbReference>
<dbReference type="PANTHER" id="PTHR33359:SF1">
    <property type="entry name" value="MOLYBDOPTERIN SYNTHASE SULFUR CARRIER SUBUNIT"/>
    <property type="match status" value="1"/>
</dbReference>
<dbReference type="Pfam" id="PF02597">
    <property type="entry name" value="ThiS"/>
    <property type="match status" value="1"/>
</dbReference>
<dbReference type="SUPFAM" id="SSF54285">
    <property type="entry name" value="MoaD/ThiS"/>
    <property type="match status" value="1"/>
</dbReference>
<evidence type="ECO:0000255" key="1">
    <source>
        <dbReference type="HAMAP-Rule" id="MF_03051"/>
    </source>
</evidence>
<evidence type="ECO:0000256" key="2">
    <source>
        <dbReference type="SAM" id="MobiDB-lite"/>
    </source>
</evidence>
<protein>
    <recommendedName>
        <fullName evidence="1">Molybdopterin synthase sulfur carrier subunit</fullName>
    </recommendedName>
    <alternativeName>
        <fullName evidence="1">Molybdenum cofactor synthesis protein 2 small subunit</fullName>
    </alternativeName>
    <alternativeName>
        <fullName evidence="1">Molybdenum cofactor synthesis protein 2A</fullName>
        <shortName evidence="1">MOCS2A</shortName>
    </alternativeName>
    <alternativeName>
        <fullName evidence="1">Sulfur carrier protein MOCS2A</fullName>
    </alternativeName>
</protein>
<name>MOC2A_ORYSI</name>
<accession>A2X635</accession>
<gene>
    <name type="ORF">OsI_07667</name>
</gene>
<sequence>MALDPKANHAAAAAASADNPTAAAAKAKVKVKVLFFARARDLTGVTEAPVEVPAGSTAGDCLARVLAAFPRLEEIRRSMVLALNEEYAPEDAAVGDGDELAIIPPISGG</sequence>
<organism>
    <name type="scientific">Oryza sativa subsp. indica</name>
    <name type="common">Rice</name>
    <dbReference type="NCBI Taxonomy" id="39946"/>
    <lineage>
        <taxon>Eukaryota</taxon>
        <taxon>Viridiplantae</taxon>
        <taxon>Streptophyta</taxon>
        <taxon>Embryophyta</taxon>
        <taxon>Tracheophyta</taxon>
        <taxon>Spermatophyta</taxon>
        <taxon>Magnoliopsida</taxon>
        <taxon>Liliopsida</taxon>
        <taxon>Poales</taxon>
        <taxon>Poaceae</taxon>
        <taxon>BOP clade</taxon>
        <taxon>Oryzoideae</taxon>
        <taxon>Oryzeae</taxon>
        <taxon>Oryzinae</taxon>
        <taxon>Oryza</taxon>
        <taxon>Oryza sativa</taxon>
    </lineage>
</organism>
<feature type="chain" id="PRO_0000369318" description="Molybdopterin synthase sulfur carrier subunit">
    <location>
        <begin position="1"/>
        <end position="109"/>
    </location>
</feature>
<feature type="region of interest" description="Disordered" evidence="2">
    <location>
        <begin position="1"/>
        <end position="21"/>
    </location>
</feature>
<feature type="modified residue" description="1-thioglycine; alternate" evidence="1">
    <location>
        <position position="109"/>
    </location>
</feature>
<feature type="modified residue" description="Glycyl adenylate; alternate" evidence="1">
    <location>
        <position position="109"/>
    </location>
</feature>
<comment type="function">
    <text evidence="1">Acts as a sulfur carrier required for molybdopterin biosynthesis. Component of the molybdopterin synthase complex that catalyzes the conversion of precursor Z into molybdopterin by mediating the incorporation of 2 sulfur atoms into precursor Z to generate a dithiolene group. In the complex, serves as sulfur donor by being thiocarboxylated (-COSH) at its C-terminus by MOCS3. After interaction with MOCS2B, the sulfur is then transferred to precursor Z to form molybdopterin.</text>
</comment>
<comment type="pathway">
    <text evidence="1">Cofactor biosynthesis; molybdopterin biosynthesis.</text>
</comment>
<comment type="subunit">
    <text evidence="1">Heterotetramer; composed of 2 small (MOCS2A) and 2 large (MOCS2B) subunits.</text>
</comment>
<comment type="subcellular location">
    <subcellularLocation>
        <location evidence="1">Cytoplasm</location>
    </subcellularLocation>
</comment>
<comment type="PTM">
    <text evidence="1">C-terminal thiocarboxylation occurs in 2 steps, it is first acyl-adenylated (-COAMP) via the hesA/moeB/thiF part of MOCS3, then thiocarboxylated (-COSH) via the rhodanese domain of MOCS3.</text>
</comment>
<comment type="similarity">
    <text evidence="1">Belongs to the MoaD family. MOCS2A subfamily.</text>
</comment>
<keyword id="KW-0963">Cytoplasm</keyword>
<keyword id="KW-0501">Molybdenum cofactor biosynthesis</keyword>
<keyword id="KW-0547">Nucleotide-binding</keyword>
<keyword id="KW-0597">Phosphoprotein</keyword>
<keyword id="KW-1185">Reference proteome</keyword>
<reference key="1">
    <citation type="journal article" date="2005" name="PLoS Biol.">
        <title>The genomes of Oryza sativa: a history of duplications.</title>
        <authorList>
            <person name="Yu J."/>
            <person name="Wang J."/>
            <person name="Lin W."/>
            <person name="Li S."/>
            <person name="Li H."/>
            <person name="Zhou J."/>
            <person name="Ni P."/>
            <person name="Dong W."/>
            <person name="Hu S."/>
            <person name="Zeng C."/>
            <person name="Zhang J."/>
            <person name="Zhang Y."/>
            <person name="Li R."/>
            <person name="Xu Z."/>
            <person name="Li S."/>
            <person name="Li X."/>
            <person name="Zheng H."/>
            <person name="Cong L."/>
            <person name="Lin L."/>
            <person name="Yin J."/>
            <person name="Geng J."/>
            <person name="Li G."/>
            <person name="Shi J."/>
            <person name="Liu J."/>
            <person name="Lv H."/>
            <person name="Li J."/>
            <person name="Wang J."/>
            <person name="Deng Y."/>
            <person name="Ran L."/>
            <person name="Shi X."/>
            <person name="Wang X."/>
            <person name="Wu Q."/>
            <person name="Li C."/>
            <person name="Ren X."/>
            <person name="Wang J."/>
            <person name="Wang X."/>
            <person name="Li D."/>
            <person name="Liu D."/>
            <person name="Zhang X."/>
            <person name="Ji Z."/>
            <person name="Zhao W."/>
            <person name="Sun Y."/>
            <person name="Zhang Z."/>
            <person name="Bao J."/>
            <person name="Han Y."/>
            <person name="Dong L."/>
            <person name="Ji J."/>
            <person name="Chen P."/>
            <person name="Wu S."/>
            <person name="Liu J."/>
            <person name="Xiao Y."/>
            <person name="Bu D."/>
            <person name="Tan J."/>
            <person name="Yang L."/>
            <person name="Ye C."/>
            <person name="Zhang J."/>
            <person name="Xu J."/>
            <person name="Zhou Y."/>
            <person name="Yu Y."/>
            <person name="Zhang B."/>
            <person name="Zhuang S."/>
            <person name="Wei H."/>
            <person name="Liu B."/>
            <person name="Lei M."/>
            <person name="Yu H."/>
            <person name="Li Y."/>
            <person name="Xu H."/>
            <person name="Wei S."/>
            <person name="He X."/>
            <person name="Fang L."/>
            <person name="Zhang Z."/>
            <person name="Zhang Y."/>
            <person name="Huang X."/>
            <person name="Su Z."/>
            <person name="Tong W."/>
            <person name="Li J."/>
            <person name="Tong Z."/>
            <person name="Li S."/>
            <person name="Ye J."/>
            <person name="Wang L."/>
            <person name="Fang L."/>
            <person name="Lei T."/>
            <person name="Chen C.-S."/>
            <person name="Chen H.-C."/>
            <person name="Xu Z."/>
            <person name="Li H."/>
            <person name="Huang H."/>
            <person name="Zhang F."/>
            <person name="Xu H."/>
            <person name="Li N."/>
            <person name="Zhao C."/>
            <person name="Li S."/>
            <person name="Dong L."/>
            <person name="Huang Y."/>
            <person name="Li L."/>
            <person name="Xi Y."/>
            <person name="Qi Q."/>
            <person name="Li W."/>
            <person name="Zhang B."/>
            <person name="Hu W."/>
            <person name="Zhang Y."/>
            <person name="Tian X."/>
            <person name="Jiao Y."/>
            <person name="Liang X."/>
            <person name="Jin J."/>
            <person name="Gao L."/>
            <person name="Zheng W."/>
            <person name="Hao B."/>
            <person name="Liu S.-M."/>
            <person name="Wang W."/>
            <person name="Yuan L."/>
            <person name="Cao M."/>
            <person name="McDermott J."/>
            <person name="Samudrala R."/>
            <person name="Wang J."/>
            <person name="Wong G.K.-S."/>
            <person name="Yang H."/>
        </authorList>
    </citation>
    <scope>NUCLEOTIDE SEQUENCE [LARGE SCALE GENOMIC DNA]</scope>
    <source>
        <strain>cv. 93-11</strain>
    </source>
</reference>